<keyword id="KW-0903">Direct protein sequencing</keyword>
<keyword id="KW-0325">Glycoprotein</keyword>
<keyword id="KW-0472">Membrane</keyword>
<keyword id="KW-0597">Phosphoprotein</keyword>
<keyword id="KW-1185">Reference proteome</keyword>
<keyword id="KW-0732">Signal</keyword>
<gene>
    <name type="primary">GLYCAM1</name>
</gene>
<feature type="signal peptide" evidence="3">
    <location>
        <begin position="1"/>
        <end position="18"/>
    </location>
</feature>
<feature type="chain" id="PRO_0000025409" description="Glycosylation-dependent cell adhesion molecule 1">
    <location>
        <begin position="19"/>
        <end position="154"/>
    </location>
</feature>
<feature type="region of interest" description="Disordered" evidence="2">
    <location>
        <begin position="51"/>
        <end position="115"/>
    </location>
</feature>
<feature type="compositionally biased region" description="Basic and acidic residues" evidence="2">
    <location>
        <begin position="51"/>
        <end position="65"/>
    </location>
</feature>
<feature type="modified residue" description="Phosphoserine" evidence="3">
    <location>
        <position position="48"/>
    </location>
</feature>
<feature type="modified residue" description="Phosphoserine" evidence="1">
    <location>
        <position position="53"/>
    </location>
</feature>
<feature type="modified residue" description="Phosphoserine" evidence="1">
    <location>
        <position position="57"/>
    </location>
</feature>
<feature type="modified residue" description="Phosphoserine" evidence="3">
    <location>
        <position position="59"/>
    </location>
</feature>
<feature type="modified residue" description="Phosphoserine" evidence="1">
    <location>
        <position position="65"/>
    </location>
</feature>
<feature type="glycosylation site" description="O-linked (GalNAc...) threonine; partial" evidence="3">
    <location>
        <position position="34"/>
    </location>
</feature>
<feature type="glycosylation site" description="N-linked (GlcNAc...) asparagine" evidence="3">
    <location>
        <position position="96"/>
    </location>
</feature>
<name>GLCM1_CAPHI</name>
<accession>P81447</accession>
<accession>Q9BDC6</accession>
<protein>
    <recommendedName>
        <fullName>Glycosylation-dependent cell adhesion molecule 1</fullName>
        <shortName>GlyCAM-1</shortName>
    </recommendedName>
    <alternativeName>
        <fullName>28 kDa milk glycoprotein PP3</fullName>
    </alternativeName>
    <alternativeName>
        <fullName>Lactophorin</fullName>
    </alternativeName>
    <alternativeName>
        <fullName>Proteose-peptone component 3</fullName>
        <shortName>PP3</shortName>
    </alternativeName>
</protein>
<proteinExistence type="evidence at protein level"/>
<dbReference type="EMBL" id="AJ249734">
    <property type="protein sequence ID" value="CAC37334.1"/>
    <property type="molecule type" value="mRNA"/>
</dbReference>
<dbReference type="EMBL" id="AJ249733">
    <property type="protein sequence ID" value="CAC37333.1"/>
    <property type="molecule type" value="Genomic_DNA"/>
</dbReference>
<dbReference type="RefSeq" id="NP_001272555.1">
    <property type="nucleotide sequence ID" value="NM_001285626.1"/>
</dbReference>
<dbReference type="SMR" id="P81447"/>
<dbReference type="STRING" id="9925.ENSCHIP00000011297"/>
<dbReference type="GlyCosmos" id="P81447">
    <property type="glycosylation" value="2 sites, No reported glycans"/>
</dbReference>
<dbReference type="iPTMnet" id="P81447"/>
<dbReference type="Ensembl" id="ENSCHIT00020064378">
    <property type="protein sequence ID" value="ENSCHIP00020049265"/>
    <property type="gene ID" value="ENSCHIG00020031320"/>
</dbReference>
<dbReference type="Ensembl" id="ENSCHIT00040045493">
    <property type="protein sequence ID" value="ENSCHIP00040037102"/>
    <property type="gene ID" value="ENSCHIG00040020916"/>
</dbReference>
<dbReference type="GeneID" id="100860769"/>
<dbReference type="KEGG" id="chx:100860769"/>
<dbReference type="CTD" id="644076"/>
<dbReference type="OrthoDB" id="9796712at2759"/>
<dbReference type="Proteomes" id="UP000291000">
    <property type="component" value="Unassembled WGS sequence"/>
</dbReference>
<dbReference type="Proteomes" id="UP000694566">
    <property type="component" value="Unplaced"/>
</dbReference>
<dbReference type="GO" id="GO:0016020">
    <property type="term" value="C:membrane"/>
    <property type="evidence" value="ECO:0000314"/>
    <property type="project" value="UniProtKB"/>
</dbReference>
<dbReference type="InterPro" id="IPR007906">
    <property type="entry name" value="GLYCAM-1"/>
</dbReference>
<dbReference type="Pfam" id="PF05242">
    <property type="entry name" value="GLYCAM-1"/>
    <property type="match status" value="1"/>
</dbReference>
<comment type="subcellular location">
    <subcellularLocation>
        <location>Membrane</location>
        <topology>Peripheral membrane protein</topology>
    </subcellularLocation>
</comment>
<comment type="tissue specificity">
    <text>Highly and specifically expressed in the lactating mammary gland.</text>
</comment>
<comment type="similarity">
    <text evidence="4">Belongs to the PP3/GlyCAM-1 family.</text>
</comment>
<evidence type="ECO:0000250" key="1">
    <source>
        <dbReference type="UniProtKB" id="P80195"/>
    </source>
</evidence>
<evidence type="ECO:0000256" key="2">
    <source>
        <dbReference type="SAM" id="MobiDB-lite"/>
    </source>
</evidence>
<evidence type="ECO:0000269" key="3">
    <source>
    </source>
</evidence>
<evidence type="ECO:0000305" key="4"/>
<organism>
    <name type="scientific">Capra hircus</name>
    <name type="common">Goat</name>
    <dbReference type="NCBI Taxonomy" id="9925"/>
    <lineage>
        <taxon>Eukaryota</taxon>
        <taxon>Metazoa</taxon>
        <taxon>Chordata</taxon>
        <taxon>Craniata</taxon>
        <taxon>Vertebrata</taxon>
        <taxon>Euteleostomi</taxon>
        <taxon>Mammalia</taxon>
        <taxon>Eutheria</taxon>
        <taxon>Laurasiatheria</taxon>
        <taxon>Artiodactyla</taxon>
        <taxon>Ruminantia</taxon>
        <taxon>Pecora</taxon>
        <taxon>Bovidae</taxon>
        <taxon>Caprinae</taxon>
        <taxon>Capra</taxon>
    </lineage>
</organism>
<sequence length="154" mass="17056">MKFLCILLLASLAATSLAILNEPEDETHLEAQPTDASAQFIISNLQISTEDLSKEPSISREDLISKEPNVIRSPRQPQNQNPKLPLSILKEKQLRNATLGSEETTEHAPSDASTTEGKLMELGHKIMKNLENTVKEIIKYLKSLFPPASEVVKP</sequence>
<reference key="1">
    <citation type="journal article" date="2003" name="Gene">
        <title>Structure and expression of goat GLYCAM1 gene: lactogenic-dependent expression in ruminant mammary gland and interspecies conservation of the proximal promoter.</title>
        <authorList>
            <person name="Le Provost F."/>
            <person name="Cassy S."/>
            <person name="Hayes H."/>
            <person name="Martin P."/>
        </authorList>
    </citation>
    <scope>NUCLEOTIDE SEQUENCE [GENOMIC DNA / MRNA]</scope>
    <source>
        <tissue>Mammary gland</tissue>
    </source>
</reference>
<reference key="2">
    <citation type="journal article" date="1998" name="J. Dairy Sci.">
        <title>The primary structure of caprine PP3: amino acid sequence, phosphorylation, and glycosylation of component PP3 from the proteose-peptone fraction of caprine milk.</title>
        <authorList>
            <person name="Lister I.M.B."/>
            <person name="Rasmussen L.K."/>
            <person name="Johnsen L.B."/>
            <person name="Moeller L."/>
            <person name="Petersen T.E."/>
            <person name="Soerensen E.S."/>
        </authorList>
    </citation>
    <scope>PROTEIN SEQUENCE OF 19-154</scope>
    <scope>PHOSPHORYLATION AT SER-48 AND SER-59</scope>
    <scope>GLYCOSYLATION AT THR-34 AND ASN-96</scope>
    <source>
        <tissue>Milk</tissue>
    </source>
</reference>